<feature type="chain" id="PRO_0000290049" description="Large ribosomal subunit protein uL23cz/uL23cy">
    <location>
        <begin position="1"/>
        <end position="93"/>
    </location>
</feature>
<geneLocation type="chloroplast"/>
<keyword id="KW-0150">Chloroplast</keyword>
<keyword id="KW-0934">Plastid</keyword>
<keyword id="KW-1185">Reference proteome</keyword>
<keyword id="KW-0687">Ribonucleoprotein</keyword>
<keyword id="KW-0689">Ribosomal protein</keyword>
<keyword id="KW-0694">RNA-binding</keyword>
<keyword id="KW-0699">rRNA-binding</keyword>
<organism>
    <name type="scientific">Oryza sativa subsp. indica</name>
    <name type="common">Rice</name>
    <dbReference type="NCBI Taxonomy" id="39946"/>
    <lineage>
        <taxon>Eukaryota</taxon>
        <taxon>Viridiplantae</taxon>
        <taxon>Streptophyta</taxon>
        <taxon>Embryophyta</taxon>
        <taxon>Tracheophyta</taxon>
        <taxon>Spermatophyta</taxon>
        <taxon>Magnoliopsida</taxon>
        <taxon>Liliopsida</taxon>
        <taxon>Poales</taxon>
        <taxon>Poaceae</taxon>
        <taxon>BOP clade</taxon>
        <taxon>Oryzoideae</taxon>
        <taxon>Oryzeae</taxon>
        <taxon>Oryzinae</taxon>
        <taxon>Oryza</taxon>
        <taxon>Oryza sativa</taxon>
    </lineage>
</organism>
<name>RK23_ORYSI</name>
<sequence length="93" mass="10764">MDGIKYAVFTEKSLRLLGKNQYTFNVESGFTKTEIKHWVELFFGVKVVAVNSHRLPGKGRRMGPILGHTMHYRRMIITLQPGYSIPLLDREKN</sequence>
<gene>
    <name type="primary">rpl23-A</name>
    <name type="ORF">9311123</name>
</gene>
<gene>
    <name type="primary">rpl23-B</name>
    <name type="ORF">9311215</name>
</gene>
<proteinExistence type="inferred from homology"/>
<accession>P0C450</accession>
<accession>P12097</accession>
<accession>Q6QXY1</accession>
<accession>Q6QY29</accession>
<dbReference type="EMBL" id="AY522329">
    <property type="protein sequence ID" value="AAS46085.1"/>
    <property type="molecule type" value="Genomic_DNA"/>
</dbReference>
<dbReference type="EMBL" id="AY522329">
    <property type="protein sequence ID" value="AAS46100.1"/>
    <property type="molecule type" value="Genomic_DNA"/>
</dbReference>
<dbReference type="RefSeq" id="YP_009161406.1">
    <property type="nucleotide sequence ID" value="NC_027678.1"/>
</dbReference>
<dbReference type="RefSeq" id="YP_009161434.1">
    <property type="nucleotide sequence ID" value="NC_027678.1"/>
</dbReference>
<dbReference type="SMR" id="P0C450"/>
<dbReference type="STRING" id="39946.P0C450"/>
<dbReference type="EnsemblPlants" id="BGIOSGA001205-TA">
    <property type="protein sequence ID" value="BGIOSGA001205-PA"/>
    <property type="gene ID" value="BGIOSGA001205"/>
</dbReference>
<dbReference type="Gramene" id="BGIOSGA001205-TA">
    <property type="protein sequence ID" value="BGIOSGA001205-PA"/>
    <property type="gene ID" value="BGIOSGA001205"/>
</dbReference>
<dbReference type="HOGENOM" id="CLU_037562_3_2_1"/>
<dbReference type="Proteomes" id="UP000007015">
    <property type="component" value="Chloroplast"/>
</dbReference>
<dbReference type="GO" id="GO:0009507">
    <property type="term" value="C:chloroplast"/>
    <property type="evidence" value="ECO:0007669"/>
    <property type="project" value="UniProtKB-SubCell"/>
</dbReference>
<dbReference type="GO" id="GO:0009536">
    <property type="term" value="C:plastid"/>
    <property type="evidence" value="ECO:0000305"/>
    <property type="project" value="Gramene"/>
</dbReference>
<dbReference type="GO" id="GO:1990904">
    <property type="term" value="C:ribonucleoprotein complex"/>
    <property type="evidence" value="ECO:0007669"/>
    <property type="project" value="UniProtKB-KW"/>
</dbReference>
<dbReference type="GO" id="GO:0005840">
    <property type="term" value="C:ribosome"/>
    <property type="evidence" value="ECO:0007669"/>
    <property type="project" value="UniProtKB-KW"/>
</dbReference>
<dbReference type="GO" id="GO:0019843">
    <property type="term" value="F:rRNA binding"/>
    <property type="evidence" value="ECO:0007669"/>
    <property type="project" value="UniProtKB-UniRule"/>
</dbReference>
<dbReference type="GO" id="GO:0003735">
    <property type="term" value="F:structural constituent of ribosome"/>
    <property type="evidence" value="ECO:0007669"/>
    <property type="project" value="InterPro"/>
</dbReference>
<dbReference type="GO" id="GO:0006412">
    <property type="term" value="P:translation"/>
    <property type="evidence" value="ECO:0007669"/>
    <property type="project" value="UniProtKB-UniRule"/>
</dbReference>
<dbReference type="FunFam" id="3.30.70.330:FF:000002">
    <property type="entry name" value="50S ribosomal protein L23, chloroplastic"/>
    <property type="match status" value="1"/>
</dbReference>
<dbReference type="Gene3D" id="3.30.70.330">
    <property type="match status" value="1"/>
</dbReference>
<dbReference type="HAMAP" id="MF_01369_B">
    <property type="entry name" value="Ribosomal_uL23_B"/>
    <property type="match status" value="1"/>
</dbReference>
<dbReference type="InterPro" id="IPR012677">
    <property type="entry name" value="Nucleotide-bd_a/b_plait_sf"/>
</dbReference>
<dbReference type="InterPro" id="IPR013025">
    <property type="entry name" value="Ribosomal_uL23-like"/>
</dbReference>
<dbReference type="InterPro" id="IPR012678">
    <property type="entry name" value="Ribosomal_uL23/eL15/eS24_sf"/>
</dbReference>
<dbReference type="InterPro" id="IPR001014">
    <property type="entry name" value="Ribosomal_uL23_CS"/>
</dbReference>
<dbReference type="PANTHER" id="PTHR11620">
    <property type="entry name" value="60S RIBOSOMAL PROTEIN L23A"/>
    <property type="match status" value="1"/>
</dbReference>
<dbReference type="Pfam" id="PF00276">
    <property type="entry name" value="Ribosomal_L23"/>
    <property type="match status" value="1"/>
</dbReference>
<dbReference type="SUPFAM" id="SSF54189">
    <property type="entry name" value="Ribosomal proteins S24e, L23 and L15e"/>
    <property type="match status" value="1"/>
</dbReference>
<dbReference type="PROSITE" id="PS00050">
    <property type="entry name" value="RIBOSOMAL_L23"/>
    <property type="match status" value="1"/>
</dbReference>
<protein>
    <recommendedName>
        <fullName evidence="2">Large ribosomal subunit protein uL23cz/uL23cy</fullName>
    </recommendedName>
    <alternativeName>
        <fullName>50S ribosomal protein L23, chloroplastic</fullName>
    </alternativeName>
</protein>
<evidence type="ECO:0000250" key="1"/>
<evidence type="ECO:0000305" key="2"/>
<reference key="1">
    <citation type="journal article" date="2004" name="Plant Physiol.">
        <title>A comparison of rice chloroplast genomes.</title>
        <authorList>
            <person name="Tang J."/>
            <person name="Xia H."/>
            <person name="Cao M."/>
            <person name="Zhang X."/>
            <person name="Zeng W."/>
            <person name="Hu S."/>
            <person name="Tong W."/>
            <person name="Wang J."/>
            <person name="Wang J."/>
            <person name="Yu J."/>
            <person name="Yang H."/>
            <person name="Zhu L."/>
        </authorList>
    </citation>
    <scope>NUCLEOTIDE SEQUENCE [LARGE SCALE GENOMIC DNA]</scope>
    <source>
        <strain>cv. 93-11</strain>
    </source>
</reference>
<comment type="function">
    <text evidence="1">Binds to 23S rRNA.</text>
</comment>
<comment type="subunit">
    <text evidence="1">Part of the 50S ribosomal subunit.</text>
</comment>
<comment type="subcellular location">
    <subcellularLocation>
        <location>Plastid</location>
        <location>Chloroplast</location>
    </subcellularLocation>
</comment>
<comment type="similarity">
    <text evidence="2">Belongs to the universal ribosomal protein uL23 family.</text>
</comment>